<comment type="function">
    <text evidence="1">Binds directly to 16S ribosomal RNA.</text>
</comment>
<comment type="similarity">
    <text evidence="1">Belongs to the bacterial ribosomal protein bS20 family.</text>
</comment>
<keyword id="KW-1185">Reference proteome</keyword>
<keyword id="KW-0687">Ribonucleoprotein</keyword>
<keyword id="KW-0689">Ribosomal protein</keyword>
<keyword id="KW-0694">RNA-binding</keyword>
<keyword id="KW-0699">rRNA-binding</keyword>
<organism>
    <name type="scientific">Mesoplasma florum (strain ATCC 33453 / NBRC 100688 / NCTC 11704 / L1)</name>
    <name type="common">Acholeplasma florum</name>
    <dbReference type="NCBI Taxonomy" id="265311"/>
    <lineage>
        <taxon>Bacteria</taxon>
        <taxon>Bacillati</taxon>
        <taxon>Mycoplasmatota</taxon>
        <taxon>Mollicutes</taxon>
        <taxon>Entomoplasmatales</taxon>
        <taxon>Entomoplasmataceae</taxon>
        <taxon>Mesoplasma</taxon>
    </lineage>
</organism>
<gene>
    <name evidence="1" type="primary">rpsT</name>
    <name type="ordered locus">Mfl368.1</name>
</gene>
<protein>
    <recommendedName>
        <fullName evidence="1">Small ribosomal subunit protein bS20</fullName>
    </recommendedName>
    <alternativeName>
        <fullName evidence="3">30S ribosomal protein S20</fullName>
    </alternativeName>
</protein>
<evidence type="ECO:0000255" key="1">
    <source>
        <dbReference type="HAMAP-Rule" id="MF_00500"/>
    </source>
</evidence>
<evidence type="ECO:0000256" key="2">
    <source>
        <dbReference type="SAM" id="MobiDB-lite"/>
    </source>
</evidence>
<evidence type="ECO:0000305" key="3"/>
<sequence length="81" mass="8895">MPNIKSQKKRVLTNEKSRASNKAIKSEIRTAIKKALAAKKDEATDATDLINHAVSLVDKGVKKGILKPNKAAREKSRLMQA</sequence>
<dbReference type="EMBL" id="AE017263">
    <property type="protein sequence ID" value="AAT75727.1"/>
    <property type="molecule type" value="Genomic_DNA"/>
</dbReference>
<dbReference type="RefSeq" id="WP_011183267.1">
    <property type="nucleotide sequence ID" value="NC_006055.1"/>
</dbReference>
<dbReference type="RefSeq" id="YP_053611.1">
    <property type="nucleotide sequence ID" value="NC_006055.1"/>
</dbReference>
<dbReference type="SMR" id="Q6F196"/>
<dbReference type="STRING" id="265311.Mfl368.1"/>
<dbReference type="PaxDb" id="265311-Mfl368.1"/>
<dbReference type="EnsemblBacteria" id="AAT75727">
    <property type="protein sequence ID" value="AAT75727"/>
    <property type="gene ID" value="Mfl368.1"/>
</dbReference>
<dbReference type="GeneID" id="2898294"/>
<dbReference type="KEGG" id="mfl:Mfl368.1"/>
<dbReference type="PATRIC" id="fig|265311.5.peg.368"/>
<dbReference type="eggNOG" id="COG0268">
    <property type="taxonomic scope" value="Bacteria"/>
</dbReference>
<dbReference type="HOGENOM" id="CLU_160655_1_2_14"/>
<dbReference type="OrthoDB" id="9808392at2"/>
<dbReference type="Proteomes" id="UP000006647">
    <property type="component" value="Chromosome"/>
</dbReference>
<dbReference type="GO" id="GO:0015935">
    <property type="term" value="C:small ribosomal subunit"/>
    <property type="evidence" value="ECO:0007669"/>
    <property type="project" value="TreeGrafter"/>
</dbReference>
<dbReference type="GO" id="GO:0070181">
    <property type="term" value="F:small ribosomal subunit rRNA binding"/>
    <property type="evidence" value="ECO:0007669"/>
    <property type="project" value="TreeGrafter"/>
</dbReference>
<dbReference type="GO" id="GO:0003735">
    <property type="term" value="F:structural constituent of ribosome"/>
    <property type="evidence" value="ECO:0007669"/>
    <property type="project" value="InterPro"/>
</dbReference>
<dbReference type="GO" id="GO:0006412">
    <property type="term" value="P:translation"/>
    <property type="evidence" value="ECO:0007669"/>
    <property type="project" value="UniProtKB-UniRule"/>
</dbReference>
<dbReference type="FunFam" id="1.20.58.110:FF:000001">
    <property type="entry name" value="30S ribosomal protein S20"/>
    <property type="match status" value="1"/>
</dbReference>
<dbReference type="Gene3D" id="1.20.58.110">
    <property type="entry name" value="Ribosomal protein S20"/>
    <property type="match status" value="1"/>
</dbReference>
<dbReference type="HAMAP" id="MF_00500">
    <property type="entry name" value="Ribosomal_bS20"/>
    <property type="match status" value="1"/>
</dbReference>
<dbReference type="InterPro" id="IPR002583">
    <property type="entry name" value="Ribosomal_bS20"/>
</dbReference>
<dbReference type="InterPro" id="IPR036510">
    <property type="entry name" value="Ribosomal_bS20_sf"/>
</dbReference>
<dbReference type="NCBIfam" id="TIGR00029">
    <property type="entry name" value="S20"/>
    <property type="match status" value="1"/>
</dbReference>
<dbReference type="PANTHER" id="PTHR33398">
    <property type="entry name" value="30S RIBOSOMAL PROTEIN S20"/>
    <property type="match status" value="1"/>
</dbReference>
<dbReference type="PANTHER" id="PTHR33398:SF1">
    <property type="entry name" value="SMALL RIBOSOMAL SUBUNIT PROTEIN BS20C"/>
    <property type="match status" value="1"/>
</dbReference>
<dbReference type="Pfam" id="PF01649">
    <property type="entry name" value="Ribosomal_S20p"/>
    <property type="match status" value="1"/>
</dbReference>
<dbReference type="SUPFAM" id="SSF46992">
    <property type="entry name" value="Ribosomal protein S20"/>
    <property type="match status" value="1"/>
</dbReference>
<proteinExistence type="inferred from homology"/>
<feature type="chain" id="PRO_0000236438" description="Small ribosomal subunit protein bS20">
    <location>
        <begin position="1"/>
        <end position="81"/>
    </location>
</feature>
<feature type="region of interest" description="Disordered" evidence="2">
    <location>
        <begin position="1"/>
        <end position="20"/>
    </location>
</feature>
<feature type="compositionally biased region" description="Basic residues" evidence="2">
    <location>
        <begin position="1"/>
        <end position="11"/>
    </location>
</feature>
<name>RS20_MESFL</name>
<reference key="1">
    <citation type="submission" date="2004-06" db="EMBL/GenBank/DDBJ databases">
        <authorList>
            <person name="Birren B.W."/>
            <person name="Stange-Thomann N."/>
            <person name="Hafez N."/>
            <person name="DeCaprio D."/>
            <person name="Fisher S."/>
            <person name="Butler J."/>
            <person name="Elkins T."/>
            <person name="Kodira C.D."/>
            <person name="Major J."/>
            <person name="Wang S."/>
            <person name="Nicol R."/>
            <person name="Nusbaum C."/>
        </authorList>
    </citation>
    <scope>NUCLEOTIDE SEQUENCE [LARGE SCALE GENOMIC DNA]</scope>
    <source>
        <strain>ATCC 33453 / NBRC 100688 / NCTC 11704 / L1</strain>
    </source>
</reference>
<accession>Q6F196</accession>